<feature type="chain" id="PRO_0000102669" description="Ribosome-binding factor A">
    <location>
        <begin position="1"/>
        <end position="126"/>
    </location>
</feature>
<accession>Q7VLI3</accession>
<reference key="1">
    <citation type="submission" date="2003-06" db="EMBL/GenBank/DDBJ databases">
        <title>The complete genome sequence of Haemophilus ducreyi.</title>
        <authorList>
            <person name="Munson R.S. Jr."/>
            <person name="Ray W.C."/>
            <person name="Mahairas G."/>
            <person name="Sabo P."/>
            <person name="Mungur R."/>
            <person name="Johnson L."/>
            <person name="Nguyen D."/>
            <person name="Wang J."/>
            <person name="Forst C."/>
            <person name="Hood L."/>
        </authorList>
    </citation>
    <scope>NUCLEOTIDE SEQUENCE [LARGE SCALE GENOMIC DNA]</scope>
    <source>
        <strain>35000HP / ATCC 700724</strain>
    </source>
</reference>
<protein>
    <recommendedName>
        <fullName evidence="1">Ribosome-binding factor A</fullName>
    </recommendedName>
</protein>
<comment type="function">
    <text evidence="1">One of several proteins that assist in the late maturation steps of the functional core of the 30S ribosomal subunit. Associates with free 30S ribosomal subunits (but not with 30S subunits that are part of 70S ribosomes or polysomes). Required for efficient processing of 16S rRNA. May interact with the 5'-terminal helix region of 16S rRNA.</text>
</comment>
<comment type="subunit">
    <text evidence="1">Monomer. Binds 30S ribosomal subunits, but not 50S ribosomal subunits or 70S ribosomes.</text>
</comment>
<comment type="subcellular location">
    <subcellularLocation>
        <location evidence="1">Cytoplasm</location>
    </subcellularLocation>
</comment>
<comment type="similarity">
    <text evidence="1">Belongs to the RbfA family.</text>
</comment>
<name>RBFA_HAEDU</name>
<organism>
    <name type="scientific">Haemophilus ducreyi (strain 35000HP / ATCC 700724)</name>
    <dbReference type="NCBI Taxonomy" id="233412"/>
    <lineage>
        <taxon>Bacteria</taxon>
        <taxon>Pseudomonadati</taxon>
        <taxon>Pseudomonadota</taxon>
        <taxon>Gammaproteobacteria</taxon>
        <taxon>Pasteurellales</taxon>
        <taxon>Pasteurellaceae</taxon>
        <taxon>Haemophilus</taxon>
    </lineage>
</organism>
<dbReference type="EMBL" id="AE017143">
    <property type="protein sequence ID" value="AAP96264.1"/>
    <property type="molecule type" value="Genomic_DNA"/>
</dbReference>
<dbReference type="RefSeq" id="WP_010945309.1">
    <property type="nucleotide sequence ID" value="NC_002940.2"/>
</dbReference>
<dbReference type="SMR" id="Q7VLI3"/>
<dbReference type="STRING" id="233412.HD_1460"/>
<dbReference type="KEGG" id="hdu:HD_1460"/>
<dbReference type="eggNOG" id="COG0858">
    <property type="taxonomic scope" value="Bacteria"/>
</dbReference>
<dbReference type="HOGENOM" id="CLU_089475_5_0_6"/>
<dbReference type="OrthoDB" id="307788at2"/>
<dbReference type="Proteomes" id="UP000001022">
    <property type="component" value="Chromosome"/>
</dbReference>
<dbReference type="GO" id="GO:0005829">
    <property type="term" value="C:cytosol"/>
    <property type="evidence" value="ECO:0007669"/>
    <property type="project" value="TreeGrafter"/>
</dbReference>
<dbReference type="GO" id="GO:0043024">
    <property type="term" value="F:ribosomal small subunit binding"/>
    <property type="evidence" value="ECO:0007669"/>
    <property type="project" value="TreeGrafter"/>
</dbReference>
<dbReference type="GO" id="GO:0030490">
    <property type="term" value="P:maturation of SSU-rRNA"/>
    <property type="evidence" value="ECO:0007669"/>
    <property type="project" value="UniProtKB-UniRule"/>
</dbReference>
<dbReference type="FunFam" id="3.30.300.20:FF:000007">
    <property type="entry name" value="Ribosome-binding factor A"/>
    <property type="match status" value="1"/>
</dbReference>
<dbReference type="Gene3D" id="3.30.300.20">
    <property type="match status" value="1"/>
</dbReference>
<dbReference type="HAMAP" id="MF_00003">
    <property type="entry name" value="RbfA"/>
    <property type="match status" value="1"/>
</dbReference>
<dbReference type="InterPro" id="IPR015946">
    <property type="entry name" value="KH_dom-like_a/b"/>
</dbReference>
<dbReference type="InterPro" id="IPR000238">
    <property type="entry name" value="RbfA"/>
</dbReference>
<dbReference type="InterPro" id="IPR023799">
    <property type="entry name" value="RbfA_dom_sf"/>
</dbReference>
<dbReference type="NCBIfam" id="TIGR00082">
    <property type="entry name" value="rbfA"/>
    <property type="match status" value="1"/>
</dbReference>
<dbReference type="PANTHER" id="PTHR33515">
    <property type="entry name" value="RIBOSOME-BINDING FACTOR A, CHLOROPLASTIC-RELATED"/>
    <property type="match status" value="1"/>
</dbReference>
<dbReference type="PANTHER" id="PTHR33515:SF1">
    <property type="entry name" value="RIBOSOME-BINDING FACTOR A, CHLOROPLASTIC-RELATED"/>
    <property type="match status" value="1"/>
</dbReference>
<dbReference type="Pfam" id="PF02033">
    <property type="entry name" value="RBFA"/>
    <property type="match status" value="1"/>
</dbReference>
<dbReference type="SUPFAM" id="SSF89919">
    <property type="entry name" value="Ribosome-binding factor A, RbfA"/>
    <property type="match status" value="1"/>
</dbReference>
<evidence type="ECO:0000255" key="1">
    <source>
        <dbReference type="HAMAP-Rule" id="MF_00003"/>
    </source>
</evidence>
<keyword id="KW-0963">Cytoplasm</keyword>
<keyword id="KW-1185">Reference proteome</keyword>
<keyword id="KW-0690">Ribosome biogenesis</keyword>
<proteinExistence type="inferred from homology"/>
<gene>
    <name evidence="1" type="primary">rbfA</name>
    <name type="ordered locus">HD_1460</name>
</gene>
<sequence length="126" mass="14502">MSREFKRSDRVAQELQKEIAVILQREVKDPRIGMVTVSDVEVSRDLAYAKIFVTFLFDNDQDIIAQGMKGLEKAGPYIRTLLGKAMRLRILPELRFIYDQSLVEGMRMSNLVSNVIKSDQAKHKED</sequence>